<accession>Q1J5B5</accession>
<comment type="function">
    <text evidence="1">One of several proteins that assist in the late maturation steps of the functional core of the 30S ribosomal subunit. Associates with free 30S ribosomal subunits (but not with 30S subunits that are part of 70S ribosomes or polysomes). Required for efficient processing of 16S rRNA. May interact with the 5'-terminal helix region of 16S rRNA.</text>
</comment>
<comment type="subunit">
    <text evidence="1">Monomer. Binds 30S ribosomal subunits, but not 50S ribosomal subunits or 70S ribosomes.</text>
</comment>
<comment type="subcellular location">
    <subcellularLocation>
        <location evidence="1">Cytoplasm</location>
    </subcellularLocation>
</comment>
<comment type="similarity">
    <text evidence="1">Belongs to the RbfA family.</text>
</comment>
<comment type="sequence caution" evidence="2">
    <conflict type="erroneous initiation">
        <sequence resource="EMBL-CDS" id="ABF38471"/>
    </conflict>
    <text>Extended N-terminus.</text>
</comment>
<proteinExistence type="inferred from homology"/>
<evidence type="ECO:0000255" key="1">
    <source>
        <dbReference type="HAMAP-Rule" id="MF_00003"/>
    </source>
</evidence>
<evidence type="ECO:0000305" key="2"/>
<keyword id="KW-0963">Cytoplasm</keyword>
<keyword id="KW-0690">Ribosome biogenesis</keyword>
<gene>
    <name evidence="1" type="primary">rbfA</name>
    <name type="ordered locus">MGAS10750_Spy1521</name>
</gene>
<feature type="chain" id="PRO_0000321260" description="Ribosome-binding factor A">
    <location>
        <begin position="1"/>
        <end position="116"/>
    </location>
</feature>
<reference key="1">
    <citation type="journal article" date="2006" name="Proc. Natl. Acad. Sci. U.S.A.">
        <title>Molecular genetic anatomy of inter- and intraserotype variation in the human bacterial pathogen group A Streptococcus.</title>
        <authorList>
            <person name="Beres S.B."/>
            <person name="Richter E.W."/>
            <person name="Nagiec M.J."/>
            <person name="Sumby P."/>
            <person name="Porcella S.F."/>
            <person name="DeLeo F.R."/>
            <person name="Musser J.M."/>
        </authorList>
    </citation>
    <scope>NUCLEOTIDE SEQUENCE [LARGE SCALE GENOMIC DNA]</scope>
    <source>
        <strain>MGAS10750</strain>
    </source>
</reference>
<organism>
    <name type="scientific">Streptococcus pyogenes serotype M4 (strain MGAS10750)</name>
    <dbReference type="NCBI Taxonomy" id="370554"/>
    <lineage>
        <taxon>Bacteria</taxon>
        <taxon>Bacillati</taxon>
        <taxon>Bacillota</taxon>
        <taxon>Bacilli</taxon>
        <taxon>Lactobacillales</taxon>
        <taxon>Streptococcaceae</taxon>
        <taxon>Streptococcus</taxon>
    </lineage>
</organism>
<sequence>MANHRIDRVGMEIKREVNDILQKKVRDPRVQGVTITEVQMQGDLSLAKVYYTIMSDLASDNQKAQTGLEKATGTIKRELGKQLTMYKIPDLVFEKDNSIAYGNKIDQLLRELDKKD</sequence>
<dbReference type="EMBL" id="CP000262">
    <property type="protein sequence ID" value="ABF38471.1"/>
    <property type="status" value="ALT_INIT"/>
    <property type="molecule type" value="Genomic_DNA"/>
</dbReference>
<dbReference type="SMR" id="Q1J5B5"/>
<dbReference type="KEGG" id="spi:MGAS10750_Spy1521"/>
<dbReference type="HOGENOM" id="CLU_089475_3_0_9"/>
<dbReference type="Proteomes" id="UP000002434">
    <property type="component" value="Chromosome"/>
</dbReference>
<dbReference type="GO" id="GO:0005829">
    <property type="term" value="C:cytosol"/>
    <property type="evidence" value="ECO:0007669"/>
    <property type="project" value="TreeGrafter"/>
</dbReference>
<dbReference type="GO" id="GO:0043024">
    <property type="term" value="F:ribosomal small subunit binding"/>
    <property type="evidence" value="ECO:0007669"/>
    <property type="project" value="TreeGrafter"/>
</dbReference>
<dbReference type="GO" id="GO:0030490">
    <property type="term" value="P:maturation of SSU-rRNA"/>
    <property type="evidence" value="ECO:0007669"/>
    <property type="project" value="UniProtKB-UniRule"/>
</dbReference>
<dbReference type="Gene3D" id="3.30.300.20">
    <property type="match status" value="1"/>
</dbReference>
<dbReference type="HAMAP" id="MF_00003">
    <property type="entry name" value="RbfA"/>
    <property type="match status" value="1"/>
</dbReference>
<dbReference type="InterPro" id="IPR015946">
    <property type="entry name" value="KH_dom-like_a/b"/>
</dbReference>
<dbReference type="InterPro" id="IPR000238">
    <property type="entry name" value="RbfA"/>
</dbReference>
<dbReference type="InterPro" id="IPR023799">
    <property type="entry name" value="RbfA_dom_sf"/>
</dbReference>
<dbReference type="InterPro" id="IPR020053">
    <property type="entry name" value="Ribosome-bd_factorA_CS"/>
</dbReference>
<dbReference type="NCBIfam" id="TIGR00082">
    <property type="entry name" value="rbfA"/>
    <property type="match status" value="1"/>
</dbReference>
<dbReference type="PANTHER" id="PTHR33515">
    <property type="entry name" value="RIBOSOME-BINDING FACTOR A, CHLOROPLASTIC-RELATED"/>
    <property type="match status" value="1"/>
</dbReference>
<dbReference type="PANTHER" id="PTHR33515:SF1">
    <property type="entry name" value="RIBOSOME-BINDING FACTOR A, CHLOROPLASTIC-RELATED"/>
    <property type="match status" value="1"/>
</dbReference>
<dbReference type="Pfam" id="PF02033">
    <property type="entry name" value="RBFA"/>
    <property type="match status" value="1"/>
</dbReference>
<dbReference type="SUPFAM" id="SSF89919">
    <property type="entry name" value="Ribosome-binding factor A, RbfA"/>
    <property type="match status" value="1"/>
</dbReference>
<dbReference type="PROSITE" id="PS01319">
    <property type="entry name" value="RBFA"/>
    <property type="match status" value="1"/>
</dbReference>
<name>RBFA_STRPF</name>
<protein>
    <recommendedName>
        <fullName evidence="1">Ribosome-binding factor A</fullName>
    </recommendedName>
</protein>